<evidence type="ECO:0000255" key="1">
    <source>
        <dbReference type="HAMAP-Rule" id="MF_00652"/>
    </source>
</evidence>
<evidence type="ECO:0000305" key="2"/>
<name>Y334_YERPN</name>
<protein>
    <recommendedName>
        <fullName evidence="1">UPF0246 protein YPN_0334</fullName>
    </recommendedName>
</protein>
<gene>
    <name type="ordered locus">YPN_0334</name>
    <name type="ORF">YP516_0340</name>
</gene>
<feature type="chain" id="PRO_0000262077" description="UPF0246 protein YPN_0334">
    <location>
        <begin position="1"/>
        <end position="258"/>
    </location>
</feature>
<dbReference type="EMBL" id="CP000305">
    <property type="protein sequence ID" value="ABG16666.1"/>
    <property type="status" value="ALT_INIT"/>
    <property type="molecule type" value="Genomic_DNA"/>
</dbReference>
<dbReference type="EMBL" id="ACNQ01000006">
    <property type="protein sequence ID" value="EEO78118.1"/>
    <property type="molecule type" value="Genomic_DNA"/>
</dbReference>
<dbReference type="SMR" id="Q1CMW4"/>
<dbReference type="KEGG" id="ypn:YPN_0334"/>
<dbReference type="HOGENOM" id="CLU_061989_0_0_6"/>
<dbReference type="Proteomes" id="UP000008936">
    <property type="component" value="Chromosome"/>
</dbReference>
<dbReference type="GO" id="GO:0005829">
    <property type="term" value="C:cytosol"/>
    <property type="evidence" value="ECO:0007669"/>
    <property type="project" value="TreeGrafter"/>
</dbReference>
<dbReference type="GO" id="GO:0033194">
    <property type="term" value="P:response to hydroperoxide"/>
    <property type="evidence" value="ECO:0007669"/>
    <property type="project" value="TreeGrafter"/>
</dbReference>
<dbReference type="HAMAP" id="MF_00652">
    <property type="entry name" value="UPF0246"/>
    <property type="match status" value="1"/>
</dbReference>
<dbReference type="InterPro" id="IPR005583">
    <property type="entry name" value="YaaA"/>
</dbReference>
<dbReference type="NCBIfam" id="NF002541">
    <property type="entry name" value="PRK02101.1-1"/>
    <property type="match status" value="1"/>
</dbReference>
<dbReference type="NCBIfam" id="NF002542">
    <property type="entry name" value="PRK02101.1-3"/>
    <property type="match status" value="1"/>
</dbReference>
<dbReference type="PANTHER" id="PTHR30283:SF4">
    <property type="entry name" value="PEROXIDE STRESS RESISTANCE PROTEIN YAAA"/>
    <property type="match status" value="1"/>
</dbReference>
<dbReference type="PANTHER" id="PTHR30283">
    <property type="entry name" value="PEROXIDE STRESS RESPONSE PROTEIN YAAA"/>
    <property type="match status" value="1"/>
</dbReference>
<dbReference type="Pfam" id="PF03883">
    <property type="entry name" value="H2O2_YaaD"/>
    <property type="match status" value="1"/>
</dbReference>
<organism>
    <name type="scientific">Yersinia pestis bv. Antiqua (strain Nepal516)</name>
    <dbReference type="NCBI Taxonomy" id="377628"/>
    <lineage>
        <taxon>Bacteria</taxon>
        <taxon>Pseudomonadati</taxon>
        <taxon>Pseudomonadota</taxon>
        <taxon>Gammaproteobacteria</taxon>
        <taxon>Enterobacterales</taxon>
        <taxon>Yersiniaceae</taxon>
        <taxon>Yersinia</taxon>
    </lineage>
</organism>
<accession>Q1CMW4</accession>
<accession>C4GNN6</accession>
<proteinExistence type="inferred from homology"/>
<reference key="1">
    <citation type="journal article" date="2006" name="J. Bacteriol.">
        <title>Complete genome sequence of Yersinia pestis strains Antiqua and Nepal516: evidence of gene reduction in an emerging pathogen.</title>
        <authorList>
            <person name="Chain P.S.G."/>
            <person name="Hu P."/>
            <person name="Malfatti S.A."/>
            <person name="Radnedge L."/>
            <person name="Larimer F."/>
            <person name="Vergez L.M."/>
            <person name="Worsham P."/>
            <person name="Chu M.C."/>
            <person name="Andersen G.L."/>
        </authorList>
    </citation>
    <scope>NUCLEOTIDE SEQUENCE [LARGE SCALE GENOMIC DNA]</scope>
    <source>
        <strain>Nepal516</strain>
    </source>
</reference>
<reference key="2">
    <citation type="submission" date="2009-04" db="EMBL/GenBank/DDBJ databases">
        <title>Yersinia pestis Nepal516A whole genome shotgun sequencing project.</title>
        <authorList>
            <person name="Plunkett G. III"/>
            <person name="Anderson B.D."/>
            <person name="Baumler D.J."/>
            <person name="Burland V."/>
            <person name="Cabot E.L."/>
            <person name="Glasner J.D."/>
            <person name="Mau B."/>
            <person name="Neeno-Eckwall E."/>
            <person name="Perna N.T."/>
            <person name="Munk A.C."/>
            <person name="Tapia R."/>
            <person name="Green L.D."/>
            <person name="Rogers Y.C."/>
            <person name="Detter J.C."/>
            <person name="Bruce D.C."/>
            <person name="Brettin T.S."/>
        </authorList>
    </citation>
    <scope>NUCLEOTIDE SEQUENCE [LARGE SCALE GENOMIC DNA]</scope>
    <source>
        <strain>Nepal516</strain>
    </source>
</reference>
<comment type="similarity">
    <text evidence="1">Belongs to the UPF0246 family.</text>
</comment>
<comment type="sequence caution" evidence="2">
    <conflict type="erroneous initiation">
        <sequence resource="EMBL-CDS" id="ABG16666"/>
    </conflict>
</comment>
<sequence length="258" mass="29073">MLIIISPAKTLDYQSPLATTKFSQPEMLDKSQALIEICRELTPAQISSLMGISDKLAGLNAARFSEWQPDFTPANARQAILAFKGDVYTGMQAESFSEADFDFAQQHLRMLSGLYGLLRPLDLMQPYRLEMGTKLANPRGKDLYAFWGDQITEKLNQALELQGDNILINLASDEYFKAVKPAKLSGSLIKPVFLDEKNGKYKIISFYAKKARGLMSRFIIQNKLTKPEQLVDFNLEGYEFDAGLSAKNELVFKRAEQH</sequence>